<sequence length="734" mass="82359">MATKFPKFSQSLSSDPTTRRIWYGIATSHDFEAHDNVTEENLYQKIFASHFGHLAIIFLWTSGNLFHVAWQGNFEAWIANPLKVKPVAHAIWDPHFGQAALKAFSRGGVNYPVDISYSGVYHWWYTIGMRTSSDLYAGALFLLVLAALCMFAGRLHLQPKFKPSISWFKNNESRLNHHLSGLFGLSSLAWCGHLIHVAIPASRGQHIGWNNFLTTPPHPAGLKPFFTGNWSDYSLNPDDPSHIFGTSSNSGKAILTFLGGFHPQTQSLWLTDIAHHHLAIAVIFIIAGHMYRTNFGIGHNIKDILEAHKPPSGKMGLGHKGLFNTISNSLHFQLGLALACLGVLSSLTAQHLYSIPPYAFISRDFVTQAALYTHHQYIAGFLMVGAFAHGAIFFVRDYDPKQNKDNVLYRMLEHKEAIISHLSWVSLFLGFHTLGLYVHNDVVVAFGNPEKQILIEPIFAQWIQATSGKTLYGFNVLLASSSSSATQAAQSLWLPNWLEAINNNNNSLFLTIGPGDFLVHHAIALGLHTTTLILVKGALDARGSKLMPDKKDFGYSFPCDGPGRGGTCDISAWDAFYLGVFWMLNTIGWTTFYWHWKHITIWQGNASQFNESSTYLMGWFRDYLWLNSSPIINGYNPYGMNNLSVWAWMFLFAHLVWATGFMFLISWRGYWQELIESLVWAHERTPLANLITWKDKPVALSIVQARLVGLVHFSVGYVLTYAAFVIASTAGKFN</sequence>
<proteinExistence type="inferred from homology"/>
<feature type="chain" id="PRO_0000088611" description="Photosystem I P700 chlorophyll a apoprotein A2">
    <location>
        <begin position="1"/>
        <end position="734"/>
    </location>
</feature>
<feature type="transmembrane region" description="Helical; Name=I" evidence="1">
    <location>
        <begin position="46"/>
        <end position="69"/>
    </location>
</feature>
<feature type="transmembrane region" description="Helical; Name=II" evidence="1">
    <location>
        <begin position="135"/>
        <end position="158"/>
    </location>
</feature>
<feature type="transmembrane region" description="Helical; Name=III" evidence="1">
    <location>
        <begin position="175"/>
        <end position="199"/>
    </location>
</feature>
<feature type="transmembrane region" description="Helical; Name=IV" evidence="1">
    <location>
        <begin position="273"/>
        <end position="291"/>
    </location>
</feature>
<feature type="transmembrane region" description="Helical; Name=V" evidence="1">
    <location>
        <begin position="330"/>
        <end position="353"/>
    </location>
</feature>
<feature type="transmembrane region" description="Helical; Name=VI" evidence="1">
    <location>
        <begin position="369"/>
        <end position="395"/>
    </location>
</feature>
<feature type="transmembrane region" description="Helical; Name=VII" evidence="1">
    <location>
        <begin position="417"/>
        <end position="439"/>
    </location>
</feature>
<feature type="transmembrane region" description="Helical; Name=VIII" evidence="1">
    <location>
        <begin position="517"/>
        <end position="535"/>
    </location>
</feature>
<feature type="transmembrane region" description="Helical; Name=IX" evidence="1">
    <location>
        <begin position="575"/>
        <end position="596"/>
    </location>
</feature>
<feature type="transmembrane region" description="Helical; Name=X" evidence="1">
    <location>
        <begin position="643"/>
        <end position="665"/>
    </location>
</feature>
<feature type="transmembrane region" description="Helical; Name=XI" evidence="1">
    <location>
        <begin position="707"/>
        <end position="727"/>
    </location>
</feature>
<feature type="binding site" evidence="1">
    <location>
        <position position="559"/>
    </location>
    <ligand>
        <name>[4Fe-4S] cluster</name>
        <dbReference type="ChEBI" id="CHEBI:49883"/>
        <note>ligand shared between dimeric partners</note>
    </ligand>
</feature>
<feature type="binding site" evidence="1">
    <location>
        <position position="568"/>
    </location>
    <ligand>
        <name>[4Fe-4S] cluster</name>
        <dbReference type="ChEBI" id="CHEBI:49883"/>
        <note>ligand shared between dimeric partners</note>
    </ligand>
</feature>
<feature type="binding site" description="axial binding residue" evidence="1">
    <location>
        <position position="654"/>
    </location>
    <ligand>
        <name>chlorophyll a</name>
        <dbReference type="ChEBI" id="CHEBI:58416"/>
        <label>B1</label>
    </ligand>
    <ligandPart>
        <name>Mg</name>
        <dbReference type="ChEBI" id="CHEBI:25107"/>
    </ligandPart>
</feature>
<feature type="binding site" description="axial binding residue" evidence="1">
    <location>
        <position position="662"/>
    </location>
    <ligand>
        <name>chlorophyll a</name>
        <dbReference type="ChEBI" id="CHEBI:58416"/>
        <label>B3</label>
    </ligand>
    <ligandPart>
        <name>Mg</name>
        <dbReference type="ChEBI" id="CHEBI:25107"/>
    </ligandPart>
</feature>
<feature type="binding site" evidence="1">
    <location>
        <position position="670"/>
    </location>
    <ligand>
        <name>chlorophyll a</name>
        <dbReference type="ChEBI" id="CHEBI:58416"/>
        <label>B3</label>
    </ligand>
</feature>
<feature type="binding site" evidence="1">
    <location>
        <position position="671"/>
    </location>
    <ligand>
        <name>phylloquinone</name>
        <dbReference type="ChEBI" id="CHEBI:18067"/>
        <label>B</label>
    </ligand>
</feature>
<name>PSAB_CYACA</name>
<evidence type="ECO:0000255" key="1">
    <source>
        <dbReference type="HAMAP-Rule" id="MF_00482"/>
    </source>
</evidence>
<protein>
    <recommendedName>
        <fullName evidence="1">Photosystem I P700 chlorophyll a apoprotein A2</fullName>
        <ecNumber evidence="1">1.97.1.12</ecNumber>
    </recommendedName>
    <alternativeName>
        <fullName evidence="1">PSI-B</fullName>
    </alternativeName>
    <alternativeName>
        <fullName evidence="1">PsaB</fullName>
    </alternativeName>
</protein>
<dbReference type="EC" id="1.97.1.12" evidence="1"/>
<dbReference type="EMBL" id="AF022186">
    <property type="protein sequence ID" value="AAF12881.1"/>
    <property type="molecule type" value="Genomic_DNA"/>
</dbReference>
<dbReference type="RefSeq" id="NP_045213.1">
    <property type="nucleotide sequence ID" value="NC_001840.1"/>
</dbReference>
<dbReference type="EMDB" id="EMD-37480"/>
<dbReference type="SMR" id="Q9TLQ6"/>
<dbReference type="GeneID" id="800121"/>
<dbReference type="GO" id="GO:0009535">
    <property type="term" value="C:chloroplast thylakoid membrane"/>
    <property type="evidence" value="ECO:0007669"/>
    <property type="project" value="UniProtKB-SubCell"/>
</dbReference>
<dbReference type="GO" id="GO:0009522">
    <property type="term" value="C:photosystem I"/>
    <property type="evidence" value="ECO:0007669"/>
    <property type="project" value="UniProtKB-KW"/>
</dbReference>
<dbReference type="GO" id="GO:0051539">
    <property type="term" value="F:4 iron, 4 sulfur cluster binding"/>
    <property type="evidence" value="ECO:0007669"/>
    <property type="project" value="UniProtKB-KW"/>
</dbReference>
<dbReference type="GO" id="GO:0016168">
    <property type="term" value="F:chlorophyll binding"/>
    <property type="evidence" value="ECO:0007669"/>
    <property type="project" value="UniProtKB-KW"/>
</dbReference>
<dbReference type="GO" id="GO:0009055">
    <property type="term" value="F:electron transfer activity"/>
    <property type="evidence" value="ECO:0007669"/>
    <property type="project" value="UniProtKB-UniRule"/>
</dbReference>
<dbReference type="GO" id="GO:0000287">
    <property type="term" value="F:magnesium ion binding"/>
    <property type="evidence" value="ECO:0007669"/>
    <property type="project" value="UniProtKB-UniRule"/>
</dbReference>
<dbReference type="GO" id="GO:0016491">
    <property type="term" value="F:oxidoreductase activity"/>
    <property type="evidence" value="ECO:0007669"/>
    <property type="project" value="UniProtKB-KW"/>
</dbReference>
<dbReference type="GO" id="GO:0015979">
    <property type="term" value="P:photosynthesis"/>
    <property type="evidence" value="ECO:0007669"/>
    <property type="project" value="UniProtKB-UniRule"/>
</dbReference>
<dbReference type="FunFam" id="1.20.1130.10:FF:000001">
    <property type="entry name" value="Photosystem I P700 chlorophyll a apoprotein A2"/>
    <property type="match status" value="1"/>
</dbReference>
<dbReference type="Gene3D" id="1.20.1130.10">
    <property type="entry name" value="Photosystem I PsaA/PsaB"/>
    <property type="match status" value="1"/>
</dbReference>
<dbReference type="HAMAP" id="MF_00482">
    <property type="entry name" value="PSI_PsaB"/>
    <property type="match status" value="1"/>
</dbReference>
<dbReference type="InterPro" id="IPR001280">
    <property type="entry name" value="PSI_PsaA/B"/>
</dbReference>
<dbReference type="InterPro" id="IPR020586">
    <property type="entry name" value="PSI_PsaA/B_CS"/>
</dbReference>
<dbReference type="InterPro" id="IPR036408">
    <property type="entry name" value="PSI_PsaA/B_sf"/>
</dbReference>
<dbReference type="InterPro" id="IPR006244">
    <property type="entry name" value="PSI_PsaB"/>
</dbReference>
<dbReference type="NCBIfam" id="TIGR01336">
    <property type="entry name" value="psaB"/>
    <property type="match status" value="1"/>
</dbReference>
<dbReference type="PANTHER" id="PTHR30128">
    <property type="entry name" value="OUTER MEMBRANE PROTEIN, OMPA-RELATED"/>
    <property type="match status" value="1"/>
</dbReference>
<dbReference type="PANTHER" id="PTHR30128:SF19">
    <property type="entry name" value="PHOTOSYSTEM I P700 CHLOROPHYLL A APOPROTEIN A1-RELATED"/>
    <property type="match status" value="1"/>
</dbReference>
<dbReference type="Pfam" id="PF00223">
    <property type="entry name" value="PsaA_PsaB"/>
    <property type="match status" value="1"/>
</dbReference>
<dbReference type="PIRSF" id="PIRSF002905">
    <property type="entry name" value="PSI_A"/>
    <property type="match status" value="1"/>
</dbReference>
<dbReference type="PRINTS" id="PR00257">
    <property type="entry name" value="PHOTSYSPSAAB"/>
</dbReference>
<dbReference type="SUPFAM" id="SSF81558">
    <property type="entry name" value="Photosystem I subunits PsaA/PsaB"/>
    <property type="match status" value="1"/>
</dbReference>
<dbReference type="PROSITE" id="PS00419">
    <property type="entry name" value="PHOTOSYSTEM_I_PSAAB"/>
    <property type="match status" value="1"/>
</dbReference>
<gene>
    <name evidence="1" type="primary">psaB</name>
</gene>
<keyword id="KW-0004">4Fe-4S</keyword>
<keyword id="KW-0148">Chlorophyll</keyword>
<keyword id="KW-0150">Chloroplast</keyword>
<keyword id="KW-0157">Chromophore</keyword>
<keyword id="KW-0249">Electron transport</keyword>
<keyword id="KW-0408">Iron</keyword>
<keyword id="KW-0411">Iron-sulfur</keyword>
<keyword id="KW-0460">Magnesium</keyword>
<keyword id="KW-0472">Membrane</keyword>
<keyword id="KW-0479">Metal-binding</keyword>
<keyword id="KW-0560">Oxidoreductase</keyword>
<keyword id="KW-0602">Photosynthesis</keyword>
<keyword id="KW-0603">Photosystem I</keyword>
<keyword id="KW-0934">Plastid</keyword>
<keyword id="KW-0793">Thylakoid</keyword>
<keyword id="KW-0812">Transmembrane</keyword>
<keyword id="KW-1133">Transmembrane helix</keyword>
<keyword id="KW-0813">Transport</keyword>
<organism>
    <name type="scientific">Cyanidium caldarium</name>
    <name type="common">Red alga</name>
    <dbReference type="NCBI Taxonomy" id="2771"/>
    <lineage>
        <taxon>Eukaryota</taxon>
        <taxon>Rhodophyta</taxon>
        <taxon>Bangiophyceae</taxon>
        <taxon>Cyanidiales</taxon>
        <taxon>Cyanidiaceae</taxon>
        <taxon>Cyanidium</taxon>
    </lineage>
</organism>
<geneLocation type="chloroplast"/>
<comment type="function">
    <text evidence="1">PsaA and PsaB bind P700, the primary electron donor of photosystem I (PSI), as well as the electron acceptors A0, A1 and FX. PSI is a plastocyanin/cytochrome c6-ferredoxin oxidoreductase, converting photonic excitation into a charge separation, which transfers an electron from the donor P700 chlorophyll pair to the spectroscopically characterized acceptors A0, A1, FX, FA and FB in turn. Oxidized P700 is reduced on the lumenal side of the thylakoid membrane by plastocyanin or cytochrome c6.</text>
</comment>
<comment type="catalytic activity">
    <reaction evidence="1">
        <text>reduced [plastocyanin] + hnu + oxidized [2Fe-2S]-[ferredoxin] = oxidized [plastocyanin] + reduced [2Fe-2S]-[ferredoxin]</text>
        <dbReference type="Rhea" id="RHEA:30407"/>
        <dbReference type="Rhea" id="RHEA-COMP:10000"/>
        <dbReference type="Rhea" id="RHEA-COMP:10001"/>
        <dbReference type="Rhea" id="RHEA-COMP:10039"/>
        <dbReference type="Rhea" id="RHEA-COMP:10040"/>
        <dbReference type="ChEBI" id="CHEBI:29036"/>
        <dbReference type="ChEBI" id="CHEBI:30212"/>
        <dbReference type="ChEBI" id="CHEBI:33737"/>
        <dbReference type="ChEBI" id="CHEBI:33738"/>
        <dbReference type="ChEBI" id="CHEBI:49552"/>
        <dbReference type="EC" id="1.97.1.12"/>
    </reaction>
</comment>
<comment type="cofactor">
    <text evidence="1">P700 is a chlorophyll a/chlorophyll a' dimer, A0 is one or more chlorophyll a, A1 is one or both phylloquinones and FX is a shared 4Fe-4S iron-sulfur center.</text>
</comment>
<comment type="subunit">
    <text evidence="1">The PsaA/B heterodimer binds the P700 chlorophyll special pair and subsequent electron acceptors. PSI consists of a core antenna complex that captures photons, and an electron transfer chain that converts photonic excitation into a charge separation. The eukaryotic PSI reaction center is composed of at least 11 subunits.</text>
</comment>
<comment type="subcellular location">
    <subcellularLocation>
        <location evidence="1">Plastid</location>
        <location evidence="1">Chloroplast thylakoid membrane</location>
        <topology evidence="1">Multi-pass membrane protein</topology>
    </subcellularLocation>
</comment>
<comment type="similarity">
    <text evidence="1">Belongs to the PsaA/PsaB family.</text>
</comment>
<reference key="1">
    <citation type="journal article" date="2000" name="J. Mol. Evol.">
        <title>The structure and gene repertoire of an ancient red algal plastid genome.</title>
        <authorList>
            <person name="Gloeckner G."/>
            <person name="Rosenthal A."/>
            <person name="Valentin K.-U."/>
        </authorList>
    </citation>
    <scope>NUCLEOTIDE SEQUENCE [LARGE SCALE GENOMIC DNA]</scope>
    <source>
        <strain>RK-1</strain>
    </source>
</reference>
<accession>Q9TLQ6</accession>